<accession>Q8FKB7</accession>
<sequence>MKFIIKLFPEITIKSQSVRLRFIKILTGNIRNVLKHYDETLAVVRHWDNIEVRAKDENQRLAIRDALTRIPGIHHILEVEDVPFTDMHDIFEKALVQYRDQLEGKTFCVRVKRRGKHDFSSIDVERYVGGGLNQHIESARVKLTNPEVTVHLEVEDDRLLLIKGRYEGIGGFPIGTQEDVLSLISGGFDSGVSSYMLMRRGCRVHYCFFNLGGAAHEIGVRQVAHYLWNRFGSSHRVRFVAINFEPVVGEILEKIDDGQMGVILKRMMVRAASKVAERYGVQALVTGEALGQVSSQTLTNLRLIDNVSDTLILRPLISYDKEHIINLARQIGTEDFARTMPEYCGVISKSPTVKAVKSKIEAEEEKFDFSILDKVVEEANNVDIREIAQQTEQEVVEVETVNGFGPNDVILDIRSIDEQEDKPLKVEGIDVVSLPFYKLSTKFGDLDQSKTWLLWCERGVMSRLQALYLREQGFNNVKVYRP</sequence>
<gene>
    <name evidence="1" type="primary">thiI</name>
    <name type="ordered locus">c0534</name>
</gene>
<reference key="1">
    <citation type="journal article" date="2002" name="Proc. Natl. Acad. Sci. U.S.A.">
        <title>Extensive mosaic structure revealed by the complete genome sequence of uropathogenic Escherichia coli.</title>
        <authorList>
            <person name="Welch R.A."/>
            <person name="Burland V."/>
            <person name="Plunkett G. III"/>
            <person name="Redford P."/>
            <person name="Roesch P."/>
            <person name="Rasko D."/>
            <person name="Buckles E.L."/>
            <person name="Liou S.-R."/>
            <person name="Boutin A."/>
            <person name="Hackett J."/>
            <person name="Stroud D."/>
            <person name="Mayhew G.F."/>
            <person name="Rose D.J."/>
            <person name="Zhou S."/>
            <person name="Schwartz D.C."/>
            <person name="Perna N.T."/>
            <person name="Mobley H.L.T."/>
            <person name="Donnenberg M.S."/>
            <person name="Blattner F.R."/>
        </authorList>
    </citation>
    <scope>NUCLEOTIDE SEQUENCE [LARGE SCALE GENOMIC DNA]</scope>
    <source>
        <strain>CFT073 / ATCC 700928 / UPEC</strain>
    </source>
</reference>
<comment type="function">
    <text evidence="1">Catalyzes the ATP-dependent transfer of a sulfur to tRNA to produce 4-thiouridine in position 8 of tRNAs, which functions as a near-UV photosensor. Also catalyzes the transfer of sulfur to the sulfur carrier protein ThiS, forming ThiS-thiocarboxylate. This is a step in the synthesis of thiazole, in the thiamine biosynthesis pathway. The sulfur is donated as persulfide by IscS.</text>
</comment>
<comment type="catalytic activity">
    <reaction evidence="1">
        <text>[ThiI sulfur-carrier protein]-S-sulfanyl-L-cysteine + a uridine in tRNA + 2 reduced [2Fe-2S]-[ferredoxin] + ATP + H(+) = [ThiI sulfur-carrier protein]-L-cysteine + a 4-thiouridine in tRNA + 2 oxidized [2Fe-2S]-[ferredoxin] + AMP + diphosphate</text>
        <dbReference type="Rhea" id="RHEA:24176"/>
        <dbReference type="Rhea" id="RHEA-COMP:10000"/>
        <dbReference type="Rhea" id="RHEA-COMP:10001"/>
        <dbReference type="Rhea" id="RHEA-COMP:13337"/>
        <dbReference type="Rhea" id="RHEA-COMP:13338"/>
        <dbReference type="Rhea" id="RHEA-COMP:13339"/>
        <dbReference type="Rhea" id="RHEA-COMP:13340"/>
        <dbReference type="ChEBI" id="CHEBI:15378"/>
        <dbReference type="ChEBI" id="CHEBI:29950"/>
        <dbReference type="ChEBI" id="CHEBI:30616"/>
        <dbReference type="ChEBI" id="CHEBI:33019"/>
        <dbReference type="ChEBI" id="CHEBI:33737"/>
        <dbReference type="ChEBI" id="CHEBI:33738"/>
        <dbReference type="ChEBI" id="CHEBI:61963"/>
        <dbReference type="ChEBI" id="CHEBI:65315"/>
        <dbReference type="ChEBI" id="CHEBI:136798"/>
        <dbReference type="ChEBI" id="CHEBI:456215"/>
        <dbReference type="EC" id="2.8.1.4"/>
    </reaction>
</comment>
<comment type="catalytic activity">
    <reaction evidence="1">
        <text>[ThiS sulfur-carrier protein]-C-terminal Gly-Gly-AMP + S-sulfanyl-L-cysteinyl-[cysteine desulfurase] + AH2 = [ThiS sulfur-carrier protein]-C-terminal-Gly-aminoethanethioate + L-cysteinyl-[cysteine desulfurase] + A + AMP + 2 H(+)</text>
        <dbReference type="Rhea" id="RHEA:43340"/>
        <dbReference type="Rhea" id="RHEA-COMP:12157"/>
        <dbReference type="Rhea" id="RHEA-COMP:12158"/>
        <dbReference type="Rhea" id="RHEA-COMP:12910"/>
        <dbReference type="Rhea" id="RHEA-COMP:19908"/>
        <dbReference type="ChEBI" id="CHEBI:13193"/>
        <dbReference type="ChEBI" id="CHEBI:15378"/>
        <dbReference type="ChEBI" id="CHEBI:17499"/>
        <dbReference type="ChEBI" id="CHEBI:29950"/>
        <dbReference type="ChEBI" id="CHEBI:61963"/>
        <dbReference type="ChEBI" id="CHEBI:90618"/>
        <dbReference type="ChEBI" id="CHEBI:232372"/>
        <dbReference type="ChEBI" id="CHEBI:456215"/>
    </reaction>
</comment>
<comment type="pathway">
    <text evidence="1">Cofactor biosynthesis; thiamine diphosphate biosynthesis.</text>
</comment>
<comment type="subcellular location">
    <subcellularLocation>
        <location evidence="1">Cytoplasm</location>
    </subcellularLocation>
</comment>
<comment type="similarity">
    <text evidence="1">Belongs to the ThiI family.</text>
</comment>
<evidence type="ECO:0000255" key="1">
    <source>
        <dbReference type="HAMAP-Rule" id="MF_00021"/>
    </source>
</evidence>
<proteinExistence type="inferred from homology"/>
<feature type="chain" id="PRO_0000154839" description="tRNA sulfurtransferase">
    <location>
        <begin position="1"/>
        <end position="482"/>
    </location>
</feature>
<feature type="domain" description="THUMP" evidence="1">
    <location>
        <begin position="61"/>
        <end position="165"/>
    </location>
</feature>
<feature type="domain" description="Rhodanese" evidence="1">
    <location>
        <begin position="404"/>
        <end position="482"/>
    </location>
</feature>
<feature type="active site" description="Cysteine persulfide intermediate" evidence="1">
    <location>
        <position position="456"/>
    </location>
</feature>
<feature type="binding site" evidence="1">
    <location>
        <begin position="183"/>
        <end position="184"/>
    </location>
    <ligand>
        <name>ATP</name>
        <dbReference type="ChEBI" id="CHEBI:30616"/>
    </ligand>
</feature>
<feature type="binding site" evidence="1">
    <location>
        <position position="265"/>
    </location>
    <ligand>
        <name>ATP</name>
        <dbReference type="ChEBI" id="CHEBI:30616"/>
    </ligand>
</feature>
<feature type="binding site" evidence="1">
    <location>
        <position position="287"/>
    </location>
    <ligand>
        <name>ATP</name>
        <dbReference type="ChEBI" id="CHEBI:30616"/>
    </ligand>
</feature>
<feature type="binding site" evidence="1">
    <location>
        <position position="296"/>
    </location>
    <ligand>
        <name>ATP</name>
        <dbReference type="ChEBI" id="CHEBI:30616"/>
    </ligand>
</feature>
<feature type="disulfide bond" description="Redox-active" evidence="1">
    <location>
        <begin position="344"/>
        <end position="456"/>
    </location>
</feature>
<protein>
    <recommendedName>
        <fullName evidence="1">tRNA sulfurtransferase</fullName>
        <ecNumber evidence="1">2.8.1.4</ecNumber>
    </recommendedName>
    <alternativeName>
        <fullName evidence="1">Sulfur carrier protein ThiS sulfurtransferase</fullName>
    </alternativeName>
    <alternativeName>
        <fullName evidence="1">Thiamine biosynthesis protein ThiI</fullName>
    </alternativeName>
    <alternativeName>
        <fullName evidence="1">tRNA 4-thiouridine synthase</fullName>
    </alternativeName>
</protein>
<organism>
    <name type="scientific">Escherichia coli O6:H1 (strain CFT073 / ATCC 700928 / UPEC)</name>
    <dbReference type="NCBI Taxonomy" id="199310"/>
    <lineage>
        <taxon>Bacteria</taxon>
        <taxon>Pseudomonadati</taxon>
        <taxon>Pseudomonadota</taxon>
        <taxon>Gammaproteobacteria</taxon>
        <taxon>Enterobacterales</taxon>
        <taxon>Enterobacteriaceae</taxon>
        <taxon>Escherichia</taxon>
    </lineage>
</organism>
<name>THII_ECOL6</name>
<keyword id="KW-0067">ATP-binding</keyword>
<keyword id="KW-0963">Cytoplasm</keyword>
<keyword id="KW-1015">Disulfide bond</keyword>
<keyword id="KW-0547">Nucleotide-binding</keyword>
<keyword id="KW-0676">Redox-active center</keyword>
<keyword id="KW-1185">Reference proteome</keyword>
<keyword id="KW-0694">RNA-binding</keyword>
<keyword id="KW-0784">Thiamine biosynthesis</keyword>
<keyword id="KW-0808">Transferase</keyword>
<keyword id="KW-0820">tRNA-binding</keyword>
<dbReference type="EC" id="2.8.1.4" evidence="1"/>
<dbReference type="EMBL" id="AE014075">
    <property type="protein sequence ID" value="AAN79012.1"/>
    <property type="molecule type" value="Genomic_DNA"/>
</dbReference>
<dbReference type="RefSeq" id="WP_000668687.1">
    <property type="nucleotide sequence ID" value="NZ_CP051263.1"/>
</dbReference>
<dbReference type="SMR" id="Q8FKB7"/>
<dbReference type="STRING" id="199310.c0534"/>
<dbReference type="KEGG" id="ecc:c0534"/>
<dbReference type="eggNOG" id="COG0301">
    <property type="taxonomic scope" value="Bacteria"/>
</dbReference>
<dbReference type="eggNOG" id="COG0607">
    <property type="taxonomic scope" value="Bacteria"/>
</dbReference>
<dbReference type="HOGENOM" id="CLU_037952_4_1_6"/>
<dbReference type="BioCyc" id="ECOL199310:C0534-MONOMER"/>
<dbReference type="UniPathway" id="UPA00060"/>
<dbReference type="Proteomes" id="UP000001410">
    <property type="component" value="Chromosome"/>
</dbReference>
<dbReference type="GO" id="GO:0005829">
    <property type="term" value="C:cytosol"/>
    <property type="evidence" value="ECO:0007669"/>
    <property type="project" value="TreeGrafter"/>
</dbReference>
<dbReference type="GO" id="GO:0005524">
    <property type="term" value="F:ATP binding"/>
    <property type="evidence" value="ECO:0007669"/>
    <property type="project" value="UniProtKB-UniRule"/>
</dbReference>
<dbReference type="GO" id="GO:0004810">
    <property type="term" value="F:CCA tRNA nucleotidyltransferase activity"/>
    <property type="evidence" value="ECO:0007669"/>
    <property type="project" value="InterPro"/>
</dbReference>
<dbReference type="GO" id="GO:0000049">
    <property type="term" value="F:tRNA binding"/>
    <property type="evidence" value="ECO:0007669"/>
    <property type="project" value="UniProtKB-UniRule"/>
</dbReference>
<dbReference type="GO" id="GO:0140741">
    <property type="term" value="F:tRNA-uracil-4 sulfurtransferase activity"/>
    <property type="evidence" value="ECO:0007669"/>
    <property type="project" value="UniProtKB-EC"/>
</dbReference>
<dbReference type="GO" id="GO:0009228">
    <property type="term" value="P:thiamine biosynthetic process"/>
    <property type="evidence" value="ECO:0007669"/>
    <property type="project" value="UniProtKB-KW"/>
</dbReference>
<dbReference type="GO" id="GO:0009229">
    <property type="term" value="P:thiamine diphosphate biosynthetic process"/>
    <property type="evidence" value="ECO:0007669"/>
    <property type="project" value="UniProtKB-UniRule"/>
</dbReference>
<dbReference type="GO" id="GO:0052837">
    <property type="term" value="P:thiazole biosynthetic process"/>
    <property type="evidence" value="ECO:0007669"/>
    <property type="project" value="InterPro"/>
</dbReference>
<dbReference type="GO" id="GO:0002937">
    <property type="term" value="P:tRNA 4-thiouridine biosynthesis"/>
    <property type="evidence" value="ECO:0007669"/>
    <property type="project" value="TreeGrafter"/>
</dbReference>
<dbReference type="CDD" id="cd01712">
    <property type="entry name" value="PPase_ThiI"/>
    <property type="match status" value="1"/>
</dbReference>
<dbReference type="CDD" id="cd00158">
    <property type="entry name" value="RHOD"/>
    <property type="match status" value="1"/>
</dbReference>
<dbReference type="CDD" id="cd11716">
    <property type="entry name" value="THUMP_ThiI"/>
    <property type="match status" value="1"/>
</dbReference>
<dbReference type="FunFam" id="3.30.2130.30:FF:000002">
    <property type="entry name" value="tRNA sulfurtransferase"/>
    <property type="match status" value="1"/>
</dbReference>
<dbReference type="FunFam" id="3.40.250.10:FF:000003">
    <property type="entry name" value="tRNA sulfurtransferase"/>
    <property type="match status" value="1"/>
</dbReference>
<dbReference type="FunFam" id="3.40.50.620:FF:000029">
    <property type="entry name" value="tRNA sulfurtransferase"/>
    <property type="match status" value="1"/>
</dbReference>
<dbReference type="Gene3D" id="3.30.2130.30">
    <property type="match status" value="1"/>
</dbReference>
<dbReference type="Gene3D" id="3.40.50.620">
    <property type="entry name" value="HUPs"/>
    <property type="match status" value="1"/>
</dbReference>
<dbReference type="Gene3D" id="3.40.250.10">
    <property type="entry name" value="Rhodanese-like domain"/>
    <property type="match status" value="1"/>
</dbReference>
<dbReference type="HAMAP" id="MF_00021">
    <property type="entry name" value="ThiI"/>
    <property type="match status" value="1"/>
</dbReference>
<dbReference type="InterPro" id="IPR001763">
    <property type="entry name" value="Rhodanese-like_dom"/>
</dbReference>
<dbReference type="InterPro" id="IPR036873">
    <property type="entry name" value="Rhodanese-like_dom_sf"/>
</dbReference>
<dbReference type="InterPro" id="IPR014729">
    <property type="entry name" value="Rossmann-like_a/b/a_fold"/>
</dbReference>
<dbReference type="InterPro" id="IPR020536">
    <property type="entry name" value="ThiI_AANH"/>
</dbReference>
<dbReference type="InterPro" id="IPR054173">
    <property type="entry name" value="ThiI_fer"/>
</dbReference>
<dbReference type="InterPro" id="IPR049961">
    <property type="entry name" value="ThiI_N"/>
</dbReference>
<dbReference type="InterPro" id="IPR026340">
    <property type="entry name" value="THII_Thiazole_biosynth_dom"/>
</dbReference>
<dbReference type="InterPro" id="IPR004114">
    <property type="entry name" value="THUMP_dom"/>
</dbReference>
<dbReference type="InterPro" id="IPR049962">
    <property type="entry name" value="THUMP_ThiI"/>
</dbReference>
<dbReference type="InterPro" id="IPR003720">
    <property type="entry name" value="tRNA_STrfase"/>
</dbReference>
<dbReference type="InterPro" id="IPR050102">
    <property type="entry name" value="tRNA_sulfurtransferase_ThiI"/>
</dbReference>
<dbReference type="NCBIfam" id="TIGR04271">
    <property type="entry name" value="ThiI_C_thiazole"/>
    <property type="match status" value="1"/>
</dbReference>
<dbReference type="NCBIfam" id="TIGR00342">
    <property type="entry name" value="tRNA uracil 4-sulfurtransferase ThiI"/>
    <property type="match status" value="1"/>
</dbReference>
<dbReference type="PANTHER" id="PTHR43209">
    <property type="entry name" value="TRNA SULFURTRANSFERASE"/>
    <property type="match status" value="1"/>
</dbReference>
<dbReference type="PANTHER" id="PTHR43209:SF1">
    <property type="entry name" value="TRNA SULFURTRANSFERASE"/>
    <property type="match status" value="1"/>
</dbReference>
<dbReference type="Pfam" id="PF02568">
    <property type="entry name" value="ThiI"/>
    <property type="match status" value="1"/>
</dbReference>
<dbReference type="Pfam" id="PF22025">
    <property type="entry name" value="ThiI_fer"/>
    <property type="match status" value="1"/>
</dbReference>
<dbReference type="Pfam" id="PF02926">
    <property type="entry name" value="THUMP"/>
    <property type="match status" value="1"/>
</dbReference>
<dbReference type="SMART" id="SM00981">
    <property type="entry name" value="THUMP"/>
    <property type="match status" value="1"/>
</dbReference>
<dbReference type="SUPFAM" id="SSF52402">
    <property type="entry name" value="Adenine nucleotide alpha hydrolases-like"/>
    <property type="match status" value="1"/>
</dbReference>
<dbReference type="SUPFAM" id="SSF52821">
    <property type="entry name" value="Rhodanese/Cell cycle control phosphatase"/>
    <property type="match status" value="1"/>
</dbReference>
<dbReference type="SUPFAM" id="SSF143437">
    <property type="entry name" value="THUMP domain-like"/>
    <property type="match status" value="1"/>
</dbReference>
<dbReference type="PROSITE" id="PS50206">
    <property type="entry name" value="RHODANESE_3"/>
    <property type="match status" value="1"/>
</dbReference>
<dbReference type="PROSITE" id="PS51165">
    <property type="entry name" value="THUMP"/>
    <property type="match status" value="1"/>
</dbReference>